<organism>
    <name type="scientific">Ovis aries</name>
    <name type="common">Sheep</name>
    <dbReference type="NCBI Taxonomy" id="9940"/>
    <lineage>
        <taxon>Eukaryota</taxon>
        <taxon>Metazoa</taxon>
        <taxon>Chordata</taxon>
        <taxon>Craniata</taxon>
        <taxon>Vertebrata</taxon>
        <taxon>Euteleostomi</taxon>
        <taxon>Mammalia</taxon>
        <taxon>Eutheria</taxon>
        <taxon>Laurasiatheria</taxon>
        <taxon>Artiodactyla</taxon>
        <taxon>Ruminantia</taxon>
        <taxon>Pecora</taxon>
        <taxon>Bovidae</taxon>
        <taxon>Caprinae</taxon>
        <taxon>Ovis</taxon>
    </lineage>
</organism>
<protein>
    <recommendedName>
        <fullName>T-cell surface glycoprotein CD3 zeta chain</fullName>
    </recommendedName>
    <alternativeName>
        <fullName>T-cell receptor T3 zeta chain</fullName>
    </alternativeName>
    <cdAntigenName>CD247</cdAntigenName>
</protein>
<evidence type="ECO:0000250" key="1"/>
<evidence type="ECO:0000250" key="2">
    <source>
        <dbReference type="UniProtKB" id="P20963"/>
    </source>
</evidence>
<evidence type="ECO:0000250" key="3">
    <source>
        <dbReference type="UniProtKB" id="P24161"/>
    </source>
</evidence>
<evidence type="ECO:0000255" key="4"/>
<evidence type="ECO:0000255" key="5">
    <source>
        <dbReference type="PROSITE-ProRule" id="PRU00379"/>
    </source>
</evidence>
<evidence type="ECO:0000256" key="6">
    <source>
        <dbReference type="SAM" id="MobiDB-lite"/>
    </source>
</evidence>
<evidence type="ECO:0000305" key="7"/>
<keyword id="KW-1064">Adaptive immunity</keyword>
<keyword id="KW-1003">Cell membrane</keyword>
<keyword id="KW-1015">Disulfide bond</keyword>
<keyword id="KW-0391">Immunity</keyword>
<keyword id="KW-0472">Membrane</keyword>
<keyword id="KW-0597">Phosphoprotein</keyword>
<keyword id="KW-0675">Receptor</keyword>
<keyword id="KW-1185">Reference proteome</keyword>
<keyword id="KW-0677">Repeat</keyword>
<keyword id="KW-0732">Signal</keyword>
<keyword id="KW-0812">Transmembrane</keyword>
<keyword id="KW-1133">Transmembrane helix</keyword>
<sequence length="166" mass="18704">MKWTALVIVAVLQTQFPVTAAQSFGLLDPKLCYLLDGILFIYGVIVTALFLRAKFSRSADAPAYQHGQNPVYNELNVGRREEYAVLDRRGGFDPEMGGKPQRKKNPHEVVYNELRKDKMAEAYSEIGMKSDNQRRRGKGHDGVYQGLSTATKDTYDALHMQALPPR</sequence>
<accession>P29329</accession>
<dbReference type="EMBL" id="Z12968">
    <property type="protein sequence ID" value="CAA78312.1"/>
    <property type="molecule type" value="mRNA"/>
</dbReference>
<dbReference type="PIR" id="I46424">
    <property type="entry name" value="I46424"/>
</dbReference>
<dbReference type="RefSeq" id="NP_001009417.1">
    <property type="nucleotide sequence ID" value="NM_001009417.1"/>
</dbReference>
<dbReference type="SMR" id="P29329"/>
<dbReference type="STRING" id="9940.ENSOARP00000012956"/>
<dbReference type="PaxDb" id="9940-ENSOARP00000012956"/>
<dbReference type="GeneID" id="443436"/>
<dbReference type="KEGG" id="oas:443436"/>
<dbReference type="CTD" id="919"/>
<dbReference type="eggNOG" id="ENOG502S5AZ">
    <property type="taxonomic scope" value="Eukaryota"/>
</dbReference>
<dbReference type="OrthoDB" id="9941225at2759"/>
<dbReference type="Proteomes" id="UP000002356">
    <property type="component" value="Unplaced"/>
</dbReference>
<dbReference type="GO" id="GO:0042105">
    <property type="term" value="C:alpha-beta T cell receptor complex"/>
    <property type="evidence" value="ECO:0000247"/>
    <property type="project" value="AgBase"/>
</dbReference>
<dbReference type="GO" id="GO:0005737">
    <property type="term" value="C:cytoplasm"/>
    <property type="evidence" value="ECO:0000247"/>
    <property type="project" value="AgBase"/>
</dbReference>
<dbReference type="GO" id="GO:0033001">
    <property type="term" value="C:Fc-gamma receptor III complex"/>
    <property type="evidence" value="ECO:0000250"/>
    <property type="project" value="UniProtKB"/>
</dbReference>
<dbReference type="GO" id="GO:0005886">
    <property type="term" value="C:plasma membrane"/>
    <property type="evidence" value="ECO:0000247"/>
    <property type="project" value="AgBase"/>
</dbReference>
<dbReference type="GO" id="GO:0042101">
    <property type="term" value="C:T cell receptor complex"/>
    <property type="evidence" value="ECO:0000247"/>
    <property type="project" value="AgBase"/>
</dbReference>
<dbReference type="GO" id="GO:0042802">
    <property type="term" value="F:identical protein binding"/>
    <property type="evidence" value="ECO:0000247"/>
    <property type="project" value="AgBase"/>
</dbReference>
<dbReference type="GO" id="GO:0042803">
    <property type="term" value="F:protein homodimerization activity"/>
    <property type="evidence" value="ECO:0000250"/>
    <property type="project" value="UniProtKB"/>
</dbReference>
<dbReference type="GO" id="GO:0004888">
    <property type="term" value="F:transmembrane signaling receptor activity"/>
    <property type="evidence" value="ECO:0007669"/>
    <property type="project" value="InterPro"/>
</dbReference>
<dbReference type="GO" id="GO:0002250">
    <property type="term" value="P:adaptive immune response"/>
    <property type="evidence" value="ECO:0007669"/>
    <property type="project" value="UniProtKB-KW"/>
</dbReference>
<dbReference type="GO" id="GO:0007166">
    <property type="term" value="P:cell surface receptor signaling pathway"/>
    <property type="evidence" value="ECO:0000247"/>
    <property type="project" value="AgBase"/>
</dbReference>
<dbReference type="GO" id="GO:0050852">
    <property type="term" value="P:T cell receptor signaling pathway"/>
    <property type="evidence" value="ECO:0000247"/>
    <property type="project" value="AgBase"/>
</dbReference>
<dbReference type="InterPro" id="IPR021663">
    <property type="entry name" value="CD3_zeta/IgE_Fc_rcpt_gamma"/>
</dbReference>
<dbReference type="InterPro" id="IPR003110">
    <property type="entry name" value="Phos_immunorcpt_sig_ITAM"/>
</dbReference>
<dbReference type="InterPro" id="IPR024128">
    <property type="entry name" value="T-cell_CD3_zeta"/>
</dbReference>
<dbReference type="PANTHER" id="PTHR10035">
    <property type="entry name" value="T-CELL SURFACE GLYCOPROTEIN CD3 ZETA CHAIN"/>
    <property type="match status" value="1"/>
</dbReference>
<dbReference type="PANTHER" id="PTHR10035:SF3">
    <property type="entry name" value="T-CELL SURFACE GLYCOPROTEIN CD3 ZETA CHAIN"/>
    <property type="match status" value="1"/>
</dbReference>
<dbReference type="Pfam" id="PF02189">
    <property type="entry name" value="ITAM"/>
    <property type="match status" value="2"/>
</dbReference>
<dbReference type="Pfam" id="PF11628">
    <property type="entry name" value="TCR_zetazeta"/>
    <property type="match status" value="1"/>
</dbReference>
<dbReference type="SMART" id="SM00077">
    <property type="entry name" value="ITAM"/>
    <property type="match status" value="3"/>
</dbReference>
<dbReference type="PROSITE" id="PS51055">
    <property type="entry name" value="ITAM_1"/>
    <property type="match status" value="3"/>
</dbReference>
<name>CD3Z_SHEEP</name>
<feature type="signal peptide" evidence="1">
    <location>
        <begin position="1"/>
        <end position="21"/>
    </location>
</feature>
<feature type="chain" id="PRO_0000016498" description="T-cell surface glycoprotein CD3 zeta chain">
    <location>
        <begin position="22"/>
        <end position="166"/>
    </location>
</feature>
<feature type="topological domain" description="Extracellular" evidence="4">
    <location>
        <begin position="22"/>
        <end position="30"/>
    </location>
</feature>
<feature type="transmembrane region" description="Helical" evidence="4">
    <location>
        <begin position="31"/>
        <end position="51"/>
    </location>
</feature>
<feature type="topological domain" description="Cytoplasmic" evidence="4">
    <location>
        <begin position="52"/>
        <end position="166"/>
    </location>
</feature>
<feature type="domain" description="ITAM 1" evidence="5">
    <location>
        <begin position="61"/>
        <end position="89"/>
    </location>
</feature>
<feature type="domain" description="ITAM 2" evidence="5">
    <location>
        <begin position="100"/>
        <end position="128"/>
    </location>
</feature>
<feature type="domain" description="ITAM 3" evidence="5">
    <location>
        <begin position="133"/>
        <end position="161"/>
    </location>
</feature>
<feature type="region of interest" description="Disordered" evidence="6">
    <location>
        <begin position="126"/>
        <end position="156"/>
    </location>
</feature>
<feature type="modified residue" description="Phosphoserine" evidence="2">
    <location>
        <position position="58"/>
    </location>
</feature>
<feature type="modified residue" description="Phosphotyrosine" evidence="2 5">
    <location>
        <position position="64"/>
    </location>
</feature>
<feature type="modified residue" description="Phosphotyrosine" evidence="2 5">
    <location>
        <position position="72"/>
    </location>
</feature>
<feature type="modified residue" description="Phosphotyrosine" evidence="2 5">
    <location>
        <position position="83"/>
    </location>
</feature>
<feature type="modified residue" description="Phosphotyrosine" evidence="2 5">
    <location>
        <position position="111"/>
    </location>
</feature>
<feature type="modified residue" description="Phosphotyrosine" evidence="2 5">
    <location>
        <position position="123"/>
    </location>
</feature>
<feature type="modified residue" description="Phosphotyrosine" evidence="2 5">
    <location>
        <position position="144"/>
    </location>
</feature>
<feature type="modified residue" description="Phosphotyrosine" evidence="2 5">
    <location>
        <position position="155"/>
    </location>
</feature>
<feature type="disulfide bond" description="Interchain" evidence="4">
    <location>
        <position position="32"/>
    </location>
</feature>
<reference key="1">
    <citation type="journal article" date="1993" name="Immunogenetics">
        <title>Invariant components of the sheep T-cell antigen receptor: cloning of the CD3 epsilon and Tcr zeta chains.</title>
        <authorList>
            <person name="Hein W.R."/>
            <person name="Tunnacliffe A."/>
        </authorList>
    </citation>
    <scope>NUCLEOTIDE SEQUENCE [MRNA]</scope>
    <source>
        <strain>White alpine</strain>
    </source>
</reference>
<comment type="function">
    <text evidence="2">Part of the TCR-CD3 complex present on T-lymphocyte cell surface that plays an essential role in adaptive immune response. When antigen presenting cells (APCs) activate T-cell receptor (TCR), TCR-mediated signals are transmitted across the cell membrane by the CD3 chains CD3D, CD3E, CD3G and CD3Z. All CD3 chains contain immunoreceptor tyrosine-based activation motifs (ITAMs) in their cytoplasmic domain. Upon TCR engagement, these motifs become phosphorylated by Src family protein tyrosine kinases LCK and FYN, resulting in the activation of downstream signaling pathways. CD3Z ITAMs phosphorylation creates multiple docking sites for the protein kinase ZAP70 leading to ZAP70 phosphorylation and its conversion into a catalytically active enzyme. Plays an important role in intrathymic T-cell differentiation. Additionally, participates in the activity-dependent synapse formation of retinal ganglion cells (RGCs) in both the retina and dorsal lateral geniculate nucleus (dLGN).</text>
</comment>
<comment type="subunit">
    <text evidence="2 3">The TCR-CD3 complex is composed of a CD3D/CD3E and a CD3G/CD3E heterodimers that preferentially associate with TCRalpha and TCRbeta, respectively, to form TCRalpha/CD3E/CD3G and TCRbeta/CD3G/CD3E trimers. In turn, the hexamer interacts with CD3Z homodimer to form the TCR-CD3 complex. Alternatively, TCRalpha and TCRbeta can be replaced by TCRgamma and TCRdelta. Interacts with SLA. Interacts with TRAT1. Interacts with DOCK2. Interacts with SLA2. Interacts with SHB. Interacts with ZAP70. Interacts (tyrosine phosphorylated) with SHC1 (via SH2 domain). Interacts with PTPRC. Interacts with CRK; this interaction regulates CD3Z phosphorylation. Interacts (on T cell side) with CD81, ICAM1 and CD9 at immunological synapses between antigen-presenting cells and T cells. Interacts with CD160. Interacts with LY6E. Interacts with LY6E (By similarity). The signaling subunit of immunoglobulin gamma (IgG) Fc receptor complex. As a homodimer or a heterodimer with FCER1G, associates with the ligand binding subunit FCGR3A (via transmembrane domain); this interaction is a prerequisite for Fc receptor complex expression on the cell surface. Interacts with CD5 (By similarity).</text>
</comment>
<comment type="subcellular location">
    <subcellularLocation>
        <location evidence="3">Cell membrane</location>
        <topology evidence="2">Single-pass type I membrane protein</topology>
    </subcellularLocation>
</comment>
<comment type="domain">
    <text evidence="2">The ITAM domains mediate interaction with SHB.</text>
</comment>
<comment type="PTM">
    <text evidence="2">Phosphorylated on Tyr residues after T-cell receptor triggering by LCK in association with CD4/CD8.</text>
</comment>
<comment type="similarity">
    <text evidence="7">Belongs to the CD3Z/FCER1G family.</text>
</comment>
<gene>
    <name type="primary">CD247</name>
    <name type="synonym">CD3Z</name>
</gene>
<proteinExistence type="evidence at transcript level"/>